<gene>
    <name evidence="1" type="primary">cca</name>
    <name type="ordered locus">ETA_04220</name>
</gene>
<feature type="chain" id="PRO_1000140038" description="Multifunctional CCA protein">
    <location>
        <begin position="1"/>
        <end position="407"/>
    </location>
</feature>
<feature type="domain" description="HD" evidence="1">
    <location>
        <begin position="228"/>
        <end position="329"/>
    </location>
</feature>
<feature type="binding site" evidence="1">
    <location>
        <position position="8"/>
    </location>
    <ligand>
        <name>ATP</name>
        <dbReference type="ChEBI" id="CHEBI:30616"/>
    </ligand>
</feature>
<feature type="binding site" evidence="1">
    <location>
        <position position="8"/>
    </location>
    <ligand>
        <name>CTP</name>
        <dbReference type="ChEBI" id="CHEBI:37563"/>
    </ligand>
</feature>
<feature type="binding site" evidence="1">
    <location>
        <position position="11"/>
    </location>
    <ligand>
        <name>ATP</name>
        <dbReference type="ChEBI" id="CHEBI:30616"/>
    </ligand>
</feature>
<feature type="binding site" evidence="1">
    <location>
        <position position="11"/>
    </location>
    <ligand>
        <name>CTP</name>
        <dbReference type="ChEBI" id="CHEBI:37563"/>
    </ligand>
</feature>
<feature type="binding site" evidence="1">
    <location>
        <position position="21"/>
    </location>
    <ligand>
        <name>Mg(2+)</name>
        <dbReference type="ChEBI" id="CHEBI:18420"/>
    </ligand>
</feature>
<feature type="binding site" evidence="1">
    <location>
        <position position="23"/>
    </location>
    <ligand>
        <name>Mg(2+)</name>
        <dbReference type="ChEBI" id="CHEBI:18420"/>
    </ligand>
</feature>
<feature type="binding site" evidence="1">
    <location>
        <position position="91"/>
    </location>
    <ligand>
        <name>ATP</name>
        <dbReference type="ChEBI" id="CHEBI:30616"/>
    </ligand>
</feature>
<feature type="binding site" evidence="1">
    <location>
        <position position="91"/>
    </location>
    <ligand>
        <name>CTP</name>
        <dbReference type="ChEBI" id="CHEBI:37563"/>
    </ligand>
</feature>
<feature type="binding site" evidence="1">
    <location>
        <position position="137"/>
    </location>
    <ligand>
        <name>ATP</name>
        <dbReference type="ChEBI" id="CHEBI:30616"/>
    </ligand>
</feature>
<feature type="binding site" evidence="1">
    <location>
        <position position="137"/>
    </location>
    <ligand>
        <name>CTP</name>
        <dbReference type="ChEBI" id="CHEBI:37563"/>
    </ligand>
</feature>
<feature type="binding site" evidence="1">
    <location>
        <position position="140"/>
    </location>
    <ligand>
        <name>ATP</name>
        <dbReference type="ChEBI" id="CHEBI:30616"/>
    </ligand>
</feature>
<feature type="binding site" evidence="1">
    <location>
        <position position="140"/>
    </location>
    <ligand>
        <name>CTP</name>
        <dbReference type="ChEBI" id="CHEBI:37563"/>
    </ligand>
</feature>
<keyword id="KW-0067">ATP-binding</keyword>
<keyword id="KW-0378">Hydrolase</keyword>
<keyword id="KW-0460">Magnesium</keyword>
<keyword id="KW-0479">Metal-binding</keyword>
<keyword id="KW-0511">Multifunctional enzyme</keyword>
<keyword id="KW-0533">Nickel</keyword>
<keyword id="KW-0547">Nucleotide-binding</keyword>
<keyword id="KW-0548">Nucleotidyltransferase</keyword>
<keyword id="KW-1185">Reference proteome</keyword>
<keyword id="KW-0692">RNA repair</keyword>
<keyword id="KW-0694">RNA-binding</keyword>
<keyword id="KW-0808">Transferase</keyword>
<keyword id="KW-0819">tRNA processing</keyword>
<sequence length="407" mass="45628">MKTYLVGGAVRDGLLNLPVKDKDWVVVGASPQQMLDRGYQQVGRDFPVFLHPESHEEYALARTERKSGRGYTGFTCYSAPDVTLEQDLARRDLTINAIAQDAGGNYCDPYGGRADLQQRLLRHVSGAFNEDPLRVLRVARFAARFAHLNFRIADETLLLMQAMTHSGELHHLTPERVWKETELALQTPSPQVFFQVLRDCGALAVLFPELDNLYGVPAPAKWHPEIDTGVHALMALAMAARLSQEIDIRFATLFHDVGKALTPKVKWPSHHGHGPAGVPLVAALCERLRVPNALRDLALLVTEFHDLVHTIQCQPPTELVALFDRVDAWRKPQRVQQIALTSEADARGRTGFENNPYPQGDYLREAWRVVQSVSTKEVVDAGFKGMAVREELTRRRIAALDAWKQVQ</sequence>
<accession>B2VGJ4</accession>
<organism>
    <name type="scientific">Erwinia tasmaniensis (strain DSM 17950 / CFBP 7177 / CIP 109463 / NCPPB 4357 / Et1/99)</name>
    <dbReference type="NCBI Taxonomy" id="465817"/>
    <lineage>
        <taxon>Bacteria</taxon>
        <taxon>Pseudomonadati</taxon>
        <taxon>Pseudomonadota</taxon>
        <taxon>Gammaproteobacteria</taxon>
        <taxon>Enterobacterales</taxon>
        <taxon>Erwiniaceae</taxon>
        <taxon>Erwinia</taxon>
    </lineage>
</organism>
<proteinExistence type="inferred from homology"/>
<dbReference type="EC" id="2.7.7.72" evidence="1"/>
<dbReference type="EC" id="3.1.3.-" evidence="1"/>
<dbReference type="EC" id="3.1.4.-" evidence="1"/>
<dbReference type="EMBL" id="CU468135">
    <property type="protein sequence ID" value="CAO95468.1"/>
    <property type="molecule type" value="Genomic_DNA"/>
</dbReference>
<dbReference type="RefSeq" id="WP_012440179.1">
    <property type="nucleotide sequence ID" value="NC_010694.1"/>
</dbReference>
<dbReference type="SMR" id="B2VGJ4"/>
<dbReference type="STRING" id="465817.ETA_04220"/>
<dbReference type="KEGG" id="eta:ETA_04220"/>
<dbReference type="eggNOG" id="COG0617">
    <property type="taxonomic scope" value="Bacteria"/>
</dbReference>
<dbReference type="HOGENOM" id="CLU_015961_1_1_6"/>
<dbReference type="OrthoDB" id="9805698at2"/>
<dbReference type="Proteomes" id="UP000001726">
    <property type="component" value="Chromosome"/>
</dbReference>
<dbReference type="GO" id="GO:0005524">
    <property type="term" value="F:ATP binding"/>
    <property type="evidence" value="ECO:0007669"/>
    <property type="project" value="UniProtKB-UniRule"/>
</dbReference>
<dbReference type="GO" id="GO:0004810">
    <property type="term" value="F:CCA tRNA nucleotidyltransferase activity"/>
    <property type="evidence" value="ECO:0007669"/>
    <property type="project" value="UniProtKB-UniRule"/>
</dbReference>
<dbReference type="GO" id="GO:0004112">
    <property type="term" value="F:cyclic-nucleotide phosphodiesterase activity"/>
    <property type="evidence" value="ECO:0007669"/>
    <property type="project" value="UniProtKB-UniRule"/>
</dbReference>
<dbReference type="GO" id="GO:0000287">
    <property type="term" value="F:magnesium ion binding"/>
    <property type="evidence" value="ECO:0007669"/>
    <property type="project" value="UniProtKB-UniRule"/>
</dbReference>
<dbReference type="GO" id="GO:0016791">
    <property type="term" value="F:phosphatase activity"/>
    <property type="evidence" value="ECO:0007669"/>
    <property type="project" value="UniProtKB-UniRule"/>
</dbReference>
<dbReference type="GO" id="GO:0000049">
    <property type="term" value="F:tRNA binding"/>
    <property type="evidence" value="ECO:0007669"/>
    <property type="project" value="UniProtKB-UniRule"/>
</dbReference>
<dbReference type="GO" id="GO:0042245">
    <property type="term" value="P:RNA repair"/>
    <property type="evidence" value="ECO:0007669"/>
    <property type="project" value="UniProtKB-KW"/>
</dbReference>
<dbReference type="GO" id="GO:0001680">
    <property type="term" value="P:tRNA 3'-terminal CCA addition"/>
    <property type="evidence" value="ECO:0007669"/>
    <property type="project" value="UniProtKB-UniRule"/>
</dbReference>
<dbReference type="FunFam" id="1.10.3090.10:FF:000001">
    <property type="entry name" value="Multifunctional CCA protein"/>
    <property type="match status" value="1"/>
</dbReference>
<dbReference type="FunFam" id="3.30.460.10:FF:000016">
    <property type="entry name" value="Multifunctional CCA protein"/>
    <property type="match status" value="1"/>
</dbReference>
<dbReference type="Gene3D" id="3.30.460.10">
    <property type="entry name" value="Beta Polymerase, domain 2"/>
    <property type="match status" value="1"/>
</dbReference>
<dbReference type="Gene3D" id="1.10.3090.10">
    <property type="entry name" value="cca-adding enzyme, domain 2"/>
    <property type="match status" value="1"/>
</dbReference>
<dbReference type="HAMAP" id="MF_01261">
    <property type="entry name" value="CCA_bact_type1"/>
    <property type="match status" value="1"/>
</dbReference>
<dbReference type="HAMAP" id="MF_01262">
    <property type="entry name" value="CCA_bact_type2"/>
    <property type="match status" value="1"/>
</dbReference>
<dbReference type="InterPro" id="IPR012006">
    <property type="entry name" value="CCA_bact"/>
</dbReference>
<dbReference type="InterPro" id="IPR006674">
    <property type="entry name" value="HD_domain"/>
</dbReference>
<dbReference type="InterPro" id="IPR043519">
    <property type="entry name" value="NT_sf"/>
</dbReference>
<dbReference type="InterPro" id="IPR002646">
    <property type="entry name" value="PolA_pol_head_dom"/>
</dbReference>
<dbReference type="InterPro" id="IPR032828">
    <property type="entry name" value="PolyA_RNA-bd"/>
</dbReference>
<dbReference type="InterPro" id="IPR050124">
    <property type="entry name" value="tRNA_CCA-adding_enzyme"/>
</dbReference>
<dbReference type="NCBIfam" id="NF008137">
    <property type="entry name" value="PRK10885.1"/>
    <property type="match status" value="1"/>
</dbReference>
<dbReference type="PANTHER" id="PTHR47545">
    <property type="entry name" value="MULTIFUNCTIONAL CCA PROTEIN"/>
    <property type="match status" value="1"/>
</dbReference>
<dbReference type="PANTHER" id="PTHR47545:SF1">
    <property type="entry name" value="MULTIFUNCTIONAL CCA PROTEIN"/>
    <property type="match status" value="1"/>
</dbReference>
<dbReference type="Pfam" id="PF01966">
    <property type="entry name" value="HD"/>
    <property type="match status" value="1"/>
</dbReference>
<dbReference type="Pfam" id="PF01743">
    <property type="entry name" value="PolyA_pol"/>
    <property type="match status" value="1"/>
</dbReference>
<dbReference type="Pfam" id="PF12627">
    <property type="entry name" value="PolyA_pol_RNAbd"/>
    <property type="match status" value="1"/>
</dbReference>
<dbReference type="PIRSF" id="PIRSF000813">
    <property type="entry name" value="CCA_bact"/>
    <property type="match status" value="1"/>
</dbReference>
<dbReference type="SUPFAM" id="SSF81301">
    <property type="entry name" value="Nucleotidyltransferase"/>
    <property type="match status" value="1"/>
</dbReference>
<dbReference type="SUPFAM" id="SSF81891">
    <property type="entry name" value="Poly A polymerase C-terminal region-like"/>
    <property type="match status" value="1"/>
</dbReference>
<dbReference type="PROSITE" id="PS51831">
    <property type="entry name" value="HD"/>
    <property type="match status" value="1"/>
</dbReference>
<comment type="function">
    <text evidence="1">Catalyzes the addition and repair of the essential 3'-terminal CCA sequence in tRNAs without using a nucleic acid template. Adds these three nucleotides in the order of C, C, and A to the tRNA nucleotide-73, using CTP and ATP as substrates and producing inorganic pyrophosphate. tRNA 3'-terminal CCA addition is required both for tRNA processing and repair. Also involved in tRNA surveillance by mediating tandem CCA addition to generate a CCACCA at the 3' terminus of unstable tRNAs. While stable tRNAs receive only 3'-terminal CCA, unstable tRNAs are marked with CCACCA and rapidly degraded.</text>
</comment>
<comment type="catalytic activity">
    <reaction evidence="1">
        <text>a tRNA precursor + 2 CTP + ATP = a tRNA with a 3' CCA end + 3 diphosphate</text>
        <dbReference type="Rhea" id="RHEA:14433"/>
        <dbReference type="Rhea" id="RHEA-COMP:10465"/>
        <dbReference type="Rhea" id="RHEA-COMP:10468"/>
        <dbReference type="ChEBI" id="CHEBI:30616"/>
        <dbReference type="ChEBI" id="CHEBI:33019"/>
        <dbReference type="ChEBI" id="CHEBI:37563"/>
        <dbReference type="ChEBI" id="CHEBI:74896"/>
        <dbReference type="ChEBI" id="CHEBI:83071"/>
        <dbReference type="EC" id="2.7.7.72"/>
    </reaction>
</comment>
<comment type="catalytic activity">
    <reaction evidence="1">
        <text>a tRNA with a 3' CCA end + 2 CTP + ATP = a tRNA with a 3' CCACCA end + 3 diphosphate</text>
        <dbReference type="Rhea" id="RHEA:76235"/>
        <dbReference type="Rhea" id="RHEA-COMP:10468"/>
        <dbReference type="Rhea" id="RHEA-COMP:18655"/>
        <dbReference type="ChEBI" id="CHEBI:30616"/>
        <dbReference type="ChEBI" id="CHEBI:33019"/>
        <dbReference type="ChEBI" id="CHEBI:37563"/>
        <dbReference type="ChEBI" id="CHEBI:83071"/>
        <dbReference type="ChEBI" id="CHEBI:195187"/>
    </reaction>
    <physiologicalReaction direction="left-to-right" evidence="1">
        <dbReference type="Rhea" id="RHEA:76236"/>
    </physiologicalReaction>
</comment>
<comment type="cofactor">
    <cofactor evidence="1">
        <name>Mg(2+)</name>
        <dbReference type="ChEBI" id="CHEBI:18420"/>
    </cofactor>
    <text evidence="1">Magnesium is required for nucleotidyltransferase activity.</text>
</comment>
<comment type="cofactor">
    <cofactor evidence="1">
        <name>Ni(2+)</name>
        <dbReference type="ChEBI" id="CHEBI:49786"/>
    </cofactor>
    <text evidence="1">Nickel for phosphatase activity.</text>
</comment>
<comment type="subunit">
    <text evidence="1">Monomer. Can also form homodimers and oligomers.</text>
</comment>
<comment type="domain">
    <text evidence="1">Comprises two domains: an N-terminal domain containing the nucleotidyltransferase activity and a C-terminal HD domain associated with both phosphodiesterase and phosphatase activities.</text>
</comment>
<comment type="miscellaneous">
    <text evidence="1">A single active site specifically recognizes both ATP and CTP and is responsible for their addition.</text>
</comment>
<comment type="similarity">
    <text evidence="1">Belongs to the tRNA nucleotidyltransferase/poly(A) polymerase family. Bacterial CCA-adding enzyme type 1 subfamily.</text>
</comment>
<name>CCA_ERWT9</name>
<reference key="1">
    <citation type="journal article" date="2008" name="Environ. Microbiol.">
        <title>The genome of Erwinia tasmaniensis strain Et1/99, a non-pathogenic bacterium in the genus Erwinia.</title>
        <authorList>
            <person name="Kube M."/>
            <person name="Migdoll A.M."/>
            <person name="Mueller I."/>
            <person name="Kuhl H."/>
            <person name="Beck A."/>
            <person name="Reinhardt R."/>
            <person name="Geider K."/>
        </authorList>
    </citation>
    <scope>NUCLEOTIDE SEQUENCE [LARGE SCALE GENOMIC DNA]</scope>
    <source>
        <strain>DSM 17950 / CFBP 7177 / CIP 109463 / NCPPB 4357 / Et1/99</strain>
    </source>
</reference>
<evidence type="ECO:0000255" key="1">
    <source>
        <dbReference type="HAMAP-Rule" id="MF_01261"/>
    </source>
</evidence>
<protein>
    <recommendedName>
        <fullName evidence="1">Multifunctional CCA protein</fullName>
    </recommendedName>
    <domain>
        <recommendedName>
            <fullName evidence="1">CCA-adding enzyme</fullName>
            <ecNumber evidence="1">2.7.7.72</ecNumber>
        </recommendedName>
        <alternativeName>
            <fullName evidence="1">CCA tRNA nucleotidyltransferase</fullName>
        </alternativeName>
        <alternativeName>
            <fullName evidence="1">tRNA CCA-pyrophosphorylase</fullName>
        </alternativeName>
        <alternativeName>
            <fullName evidence="1">tRNA adenylyl-/cytidylyl-transferase</fullName>
        </alternativeName>
        <alternativeName>
            <fullName evidence="1">tRNA nucleotidyltransferase</fullName>
        </alternativeName>
        <alternativeName>
            <fullName evidence="1">tRNA-NT</fullName>
        </alternativeName>
    </domain>
    <domain>
        <recommendedName>
            <fullName evidence="1">2'-nucleotidase</fullName>
            <ecNumber evidence="1">3.1.3.-</ecNumber>
        </recommendedName>
    </domain>
    <domain>
        <recommendedName>
            <fullName evidence="1">2',3'-cyclic phosphodiesterase</fullName>
            <ecNumber evidence="1">3.1.4.-</ecNumber>
        </recommendedName>
    </domain>
    <domain>
        <recommendedName>
            <fullName evidence="1">Phosphatase</fullName>
            <ecNumber evidence="1">3.1.3.-</ecNumber>
        </recommendedName>
    </domain>
</protein>